<keyword id="KW-0067">ATP-binding</keyword>
<keyword id="KW-0315">Glutamine amidotransferase</keyword>
<keyword id="KW-0436">Ligase</keyword>
<keyword id="KW-0460">Magnesium</keyword>
<keyword id="KW-0479">Metal-binding</keyword>
<keyword id="KW-0547">Nucleotide-binding</keyword>
<keyword id="KW-0665">Pyrimidine biosynthesis</keyword>
<protein>
    <recommendedName>
        <fullName evidence="1">CTP synthase</fullName>
        <ecNumber evidence="1">6.3.4.2</ecNumber>
    </recommendedName>
    <alternativeName>
        <fullName evidence="1">Cytidine 5'-triphosphate synthase</fullName>
    </alternativeName>
    <alternativeName>
        <fullName evidence="1">Cytidine triphosphate synthetase</fullName>
        <shortName evidence="1">CTP synthetase</shortName>
        <shortName evidence="1">CTPS</shortName>
    </alternativeName>
    <alternativeName>
        <fullName evidence="1">UTP--ammonia ligase</fullName>
    </alternativeName>
</protein>
<accession>Q0BLA3</accession>
<name>PYRG_FRATO</name>
<evidence type="ECO:0000255" key="1">
    <source>
        <dbReference type="HAMAP-Rule" id="MF_01227"/>
    </source>
</evidence>
<comment type="function">
    <text evidence="1">Catalyzes the ATP-dependent amination of UTP to CTP with either L-glutamine or ammonia as the source of nitrogen. Regulates intracellular CTP levels through interactions with the four ribonucleotide triphosphates.</text>
</comment>
<comment type="catalytic activity">
    <reaction evidence="1">
        <text>UTP + L-glutamine + ATP + H2O = CTP + L-glutamate + ADP + phosphate + 2 H(+)</text>
        <dbReference type="Rhea" id="RHEA:26426"/>
        <dbReference type="ChEBI" id="CHEBI:15377"/>
        <dbReference type="ChEBI" id="CHEBI:15378"/>
        <dbReference type="ChEBI" id="CHEBI:29985"/>
        <dbReference type="ChEBI" id="CHEBI:30616"/>
        <dbReference type="ChEBI" id="CHEBI:37563"/>
        <dbReference type="ChEBI" id="CHEBI:43474"/>
        <dbReference type="ChEBI" id="CHEBI:46398"/>
        <dbReference type="ChEBI" id="CHEBI:58359"/>
        <dbReference type="ChEBI" id="CHEBI:456216"/>
        <dbReference type="EC" id="6.3.4.2"/>
    </reaction>
</comment>
<comment type="catalytic activity">
    <reaction evidence="1">
        <text>L-glutamine + H2O = L-glutamate + NH4(+)</text>
        <dbReference type="Rhea" id="RHEA:15889"/>
        <dbReference type="ChEBI" id="CHEBI:15377"/>
        <dbReference type="ChEBI" id="CHEBI:28938"/>
        <dbReference type="ChEBI" id="CHEBI:29985"/>
        <dbReference type="ChEBI" id="CHEBI:58359"/>
    </reaction>
</comment>
<comment type="catalytic activity">
    <reaction evidence="1">
        <text>UTP + NH4(+) + ATP = CTP + ADP + phosphate + 2 H(+)</text>
        <dbReference type="Rhea" id="RHEA:16597"/>
        <dbReference type="ChEBI" id="CHEBI:15378"/>
        <dbReference type="ChEBI" id="CHEBI:28938"/>
        <dbReference type="ChEBI" id="CHEBI:30616"/>
        <dbReference type="ChEBI" id="CHEBI:37563"/>
        <dbReference type="ChEBI" id="CHEBI:43474"/>
        <dbReference type="ChEBI" id="CHEBI:46398"/>
        <dbReference type="ChEBI" id="CHEBI:456216"/>
    </reaction>
</comment>
<comment type="activity regulation">
    <text evidence="1">Allosterically activated by GTP, when glutamine is the substrate; GTP has no effect on the reaction when ammonia is the substrate. The allosteric effector GTP functions by stabilizing the protein conformation that binds the tetrahedral intermediate(s) formed during glutamine hydrolysis. Inhibited by the product CTP, via allosteric rather than competitive inhibition.</text>
</comment>
<comment type="pathway">
    <text evidence="1">Pyrimidine metabolism; CTP biosynthesis via de novo pathway; CTP from UDP: step 2/2.</text>
</comment>
<comment type="subunit">
    <text evidence="1">Homotetramer.</text>
</comment>
<comment type="miscellaneous">
    <text evidence="1">CTPSs have evolved a hybrid strategy for distinguishing between UTP and CTP. The overlapping regions of the product feedback inhibitory and substrate sites recognize a common feature in both compounds, the triphosphate moiety. To differentiate isosteric substrate and product pyrimidine rings, an additional pocket far from the expected kinase/ligase catalytic site, specifically recognizes the cytosine and ribose portions of the product inhibitor.</text>
</comment>
<comment type="similarity">
    <text evidence="1">Belongs to the CTP synthase family.</text>
</comment>
<gene>
    <name evidence="1" type="primary">pyrG</name>
    <name type="ordered locus">FTH_1283</name>
</gene>
<proteinExistence type="inferred from homology"/>
<dbReference type="EC" id="6.3.4.2" evidence="1"/>
<dbReference type="EMBL" id="CP000437">
    <property type="protein sequence ID" value="ABI83131.1"/>
    <property type="molecule type" value="Genomic_DNA"/>
</dbReference>
<dbReference type="RefSeq" id="WP_003016498.1">
    <property type="nucleotide sequence ID" value="NC_017463.1"/>
</dbReference>
<dbReference type="SMR" id="Q0BLA3"/>
<dbReference type="KEGG" id="fth:FTH_1283"/>
<dbReference type="UniPathway" id="UPA00159">
    <property type="reaction ID" value="UER00277"/>
</dbReference>
<dbReference type="GO" id="GO:0005829">
    <property type="term" value="C:cytosol"/>
    <property type="evidence" value="ECO:0007669"/>
    <property type="project" value="TreeGrafter"/>
</dbReference>
<dbReference type="GO" id="GO:0005524">
    <property type="term" value="F:ATP binding"/>
    <property type="evidence" value="ECO:0007669"/>
    <property type="project" value="UniProtKB-KW"/>
</dbReference>
<dbReference type="GO" id="GO:0003883">
    <property type="term" value="F:CTP synthase activity"/>
    <property type="evidence" value="ECO:0007669"/>
    <property type="project" value="UniProtKB-UniRule"/>
</dbReference>
<dbReference type="GO" id="GO:0004359">
    <property type="term" value="F:glutaminase activity"/>
    <property type="evidence" value="ECO:0007669"/>
    <property type="project" value="RHEA"/>
</dbReference>
<dbReference type="GO" id="GO:0042802">
    <property type="term" value="F:identical protein binding"/>
    <property type="evidence" value="ECO:0007669"/>
    <property type="project" value="TreeGrafter"/>
</dbReference>
<dbReference type="GO" id="GO:0046872">
    <property type="term" value="F:metal ion binding"/>
    <property type="evidence" value="ECO:0007669"/>
    <property type="project" value="UniProtKB-KW"/>
</dbReference>
<dbReference type="GO" id="GO:0044210">
    <property type="term" value="P:'de novo' CTP biosynthetic process"/>
    <property type="evidence" value="ECO:0007669"/>
    <property type="project" value="UniProtKB-UniRule"/>
</dbReference>
<dbReference type="GO" id="GO:0019856">
    <property type="term" value="P:pyrimidine nucleobase biosynthetic process"/>
    <property type="evidence" value="ECO:0007669"/>
    <property type="project" value="TreeGrafter"/>
</dbReference>
<dbReference type="CDD" id="cd03113">
    <property type="entry name" value="CTPS_N"/>
    <property type="match status" value="1"/>
</dbReference>
<dbReference type="CDD" id="cd01746">
    <property type="entry name" value="GATase1_CTP_Synthase"/>
    <property type="match status" value="1"/>
</dbReference>
<dbReference type="FunFam" id="3.40.50.300:FF:000009">
    <property type="entry name" value="CTP synthase"/>
    <property type="match status" value="1"/>
</dbReference>
<dbReference type="FunFam" id="3.40.50.880:FF:000002">
    <property type="entry name" value="CTP synthase"/>
    <property type="match status" value="1"/>
</dbReference>
<dbReference type="Gene3D" id="3.40.50.880">
    <property type="match status" value="1"/>
</dbReference>
<dbReference type="Gene3D" id="3.40.50.300">
    <property type="entry name" value="P-loop containing nucleotide triphosphate hydrolases"/>
    <property type="match status" value="1"/>
</dbReference>
<dbReference type="HAMAP" id="MF_01227">
    <property type="entry name" value="PyrG"/>
    <property type="match status" value="1"/>
</dbReference>
<dbReference type="InterPro" id="IPR029062">
    <property type="entry name" value="Class_I_gatase-like"/>
</dbReference>
<dbReference type="InterPro" id="IPR004468">
    <property type="entry name" value="CTP_synthase"/>
</dbReference>
<dbReference type="InterPro" id="IPR017456">
    <property type="entry name" value="CTP_synthase_N"/>
</dbReference>
<dbReference type="InterPro" id="IPR017926">
    <property type="entry name" value="GATASE"/>
</dbReference>
<dbReference type="InterPro" id="IPR033828">
    <property type="entry name" value="GATase1_CTP_Synthase"/>
</dbReference>
<dbReference type="InterPro" id="IPR027417">
    <property type="entry name" value="P-loop_NTPase"/>
</dbReference>
<dbReference type="NCBIfam" id="NF003792">
    <property type="entry name" value="PRK05380.1"/>
    <property type="match status" value="1"/>
</dbReference>
<dbReference type="NCBIfam" id="TIGR00337">
    <property type="entry name" value="PyrG"/>
    <property type="match status" value="1"/>
</dbReference>
<dbReference type="PANTHER" id="PTHR11550">
    <property type="entry name" value="CTP SYNTHASE"/>
    <property type="match status" value="1"/>
</dbReference>
<dbReference type="PANTHER" id="PTHR11550:SF0">
    <property type="entry name" value="CTP SYNTHASE-RELATED"/>
    <property type="match status" value="1"/>
</dbReference>
<dbReference type="Pfam" id="PF06418">
    <property type="entry name" value="CTP_synth_N"/>
    <property type="match status" value="1"/>
</dbReference>
<dbReference type="Pfam" id="PF00117">
    <property type="entry name" value="GATase"/>
    <property type="match status" value="1"/>
</dbReference>
<dbReference type="SUPFAM" id="SSF52317">
    <property type="entry name" value="Class I glutamine amidotransferase-like"/>
    <property type="match status" value="1"/>
</dbReference>
<dbReference type="SUPFAM" id="SSF52540">
    <property type="entry name" value="P-loop containing nucleoside triphosphate hydrolases"/>
    <property type="match status" value="1"/>
</dbReference>
<dbReference type="PROSITE" id="PS51273">
    <property type="entry name" value="GATASE_TYPE_1"/>
    <property type="match status" value="1"/>
</dbReference>
<reference key="1">
    <citation type="journal article" date="2006" name="J. Bacteriol.">
        <title>Chromosome rearrangement and diversification of Francisella tularensis revealed by the type B (OSU18) genome sequence.</title>
        <authorList>
            <person name="Petrosino J.F."/>
            <person name="Xiang Q."/>
            <person name="Karpathy S.E."/>
            <person name="Jiang H."/>
            <person name="Yerrapragada S."/>
            <person name="Liu Y."/>
            <person name="Gioia J."/>
            <person name="Hemphill L."/>
            <person name="Gonzalez A."/>
            <person name="Raghavan T.M."/>
            <person name="Uzman A."/>
            <person name="Fox G.E."/>
            <person name="Highlander S."/>
            <person name="Reichard M."/>
            <person name="Morton R.J."/>
            <person name="Clinkenbeard K.D."/>
            <person name="Weinstock G.M."/>
        </authorList>
    </citation>
    <scope>NUCLEOTIDE SEQUENCE [LARGE SCALE GENOMIC DNA]</scope>
    <source>
        <strain>OSU18</strain>
    </source>
</reference>
<sequence>MNSNTKIIFVTGGVVSSLGKGVTAASLATLLESRGLNVTMMKLDPYINVDPGTMSPLQHGEVFVTEDGAETDLDLGHYERFIRNKMTQANNFTTGKVYQSVLRRERKGDYLGATIQVIPHITDEIKRRICSGIADDVDVAIVEIGGTVGDIESQPFLEAIRQLRIELGRNRTLFVHLTLLPYIKVAGEIKTKPTQHSVKELRGIGIQADVLVCRCEKKFDDSEKRKIALFTNVDQDCIFTAEDVDTIYEVPLKYNQQGFDAKLVELLNLNAKEADLSEWQNVVNTIRDVKGEVIIAMVGKYVSLTEAYKSLNEALYNAGYKKGVKVKIKFVDSEDVNENNVESYFKDVAAILVPGGFGSRGVEGKIISIKYARENQIPFLGICLGMQLAVIEYARNILGIKDAHSSELEPTTANPVIGLITEWQAEDGTVHQRTHSSDLGGTMRLGGYKCVLKQGSRAREIYQADEVVERHRHRYEVNSNYVERLEEAGLIFSGRSEDNKLMELIEIPQHKWFIACQAHPEFTSTPRYGHKLFESYIQAAIENSNN</sequence>
<feature type="chain" id="PRO_0000266120" description="CTP synthase">
    <location>
        <begin position="1"/>
        <end position="546"/>
    </location>
</feature>
<feature type="domain" description="Glutamine amidotransferase type-1" evidence="1">
    <location>
        <begin position="294"/>
        <end position="546"/>
    </location>
</feature>
<feature type="region of interest" description="Amidoligase domain" evidence="1">
    <location>
        <begin position="1"/>
        <end position="269"/>
    </location>
</feature>
<feature type="active site" description="Nucleophile; for glutamine hydrolysis" evidence="1">
    <location>
        <position position="383"/>
    </location>
</feature>
<feature type="active site" evidence="1">
    <location>
        <position position="519"/>
    </location>
</feature>
<feature type="active site" evidence="1">
    <location>
        <position position="521"/>
    </location>
</feature>
<feature type="binding site" evidence="1">
    <location>
        <position position="16"/>
    </location>
    <ligand>
        <name>CTP</name>
        <dbReference type="ChEBI" id="CHEBI:37563"/>
        <note>allosteric inhibitor</note>
    </ligand>
</feature>
<feature type="binding site" evidence="1">
    <location>
        <position position="16"/>
    </location>
    <ligand>
        <name>UTP</name>
        <dbReference type="ChEBI" id="CHEBI:46398"/>
    </ligand>
</feature>
<feature type="binding site" evidence="1">
    <location>
        <begin position="17"/>
        <end position="22"/>
    </location>
    <ligand>
        <name>ATP</name>
        <dbReference type="ChEBI" id="CHEBI:30616"/>
    </ligand>
</feature>
<feature type="binding site" evidence="1">
    <location>
        <position position="74"/>
    </location>
    <ligand>
        <name>ATP</name>
        <dbReference type="ChEBI" id="CHEBI:30616"/>
    </ligand>
</feature>
<feature type="binding site" evidence="1">
    <location>
        <position position="74"/>
    </location>
    <ligand>
        <name>Mg(2+)</name>
        <dbReference type="ChEBI" id="CHEBI:18420"/>
    </ligand>
</feature>
<feature type="binding site" evidence="1">
    <location>
        <position position="143"/>
    </location>
    <ligand>
        <name>Mg(2+)</name>
        <dbReference type="ChEBI" id="CHEBI:18420"/>
    </ligand>
</feature>
<feature type="binding site" evidence="1">
    <location>
        <begin position="150"/>
        <end position="152"/>
    </location>
    <ligand>
        <name>CTP</name>
        <dbReference type="ChEBI" id="CHEBI:37563"/>
        <note>allosteric inhibitor</note>
    </ligand>
</feature>
<feature type="binding site" evidence="1">
    <location>
        <begin position="190"/>
        <end position="195"/>
    </location>
    <ligand>
        <name>CTP</name>
        <dbReference type="ChEBI" id="CHEBI:37563"/>
        <note>allosteric inhibitor</note>
    </ligand>
</feature>
<feature type="binding site" evidence="1">
    <location>
        <begin position="190"/>
        <end position="195"/>
    </location>
    <ligand>
        <name>UTP</name>
        <dbReference type="ChEBI" id="CHEBI:46398"/>
    </ligand>
</feature>
<feature type="binding site" evidence="1">
    <location>
        <position position="226"/>
    </location>
    <ligand>
        <name>CTP</name>
        <dbReference type="ChEBI" id="CHEBI:37563"/>
        <note>allosteric inhibitor</note>
    </ligand>
</feature>
<feature type="binding site" evidence="1">
    <location>
        <position position="226"/>
    </location>
    <ligand>
        <name>UTP</name>
        <dbReference type="ChEBI" id="CHEBI:46398"/>
    </ligand>
</feature>
<feature type="binding site" evidence="1">
    <location>
        <position position="356"/>
    </location>
    <ligand>
        <name>L-glutamine</name>
        <dbReference type="ChEBI" id="CHEBI:58359"/>
    </ligand>
</feature>
<feature type="binding site" evidence="1">
    <location>
        <begin position="384"/>
        <end position="387"/>
    </location>
    <ligand>
        <name>L-glutamine</name>
        <dbReference type="ChEBI" id="CHEBI:58359"/>
    </ligand>
</feature>
<feature type="binding site" evidence="1">
    <location>
        <position position="407"/>
    </location>
    <ligand>
        <name>L-glutamine</name>
        <dbReference type="ChEBI" id="CHEBI:58359"/>
    </ligand>
</feature>
<feature type="binding site" evidence="1">
    <location>
        <position position="474"/>
    </location>
    <ligand>
        <name>L-glutamine</name>
        <dbReference type="ChEBI" id="CHEBI:58359"/>
    </ligand>
</feature>
<organism>
    <name type="scientific">Francisella tularensis subsp. holarctica (strain OSU18)</name>
    <dbReference type="NCBI Taxonomy" id="393011"/>
    <lineage>
        <taxon>Bacteria</taxon>
        <taxon>Pseudomonadati</taxon>
        <taxon>Pseudomonadota</taxon>
        <taxon>Gammaproteobacteria</taxon>
        <taxon>Thiotrichales</taxon>
        <taxon>Francisellaceae</taxon>
        <taxon>Francisella</taxon>
    </lineage>
</organism>